<feature type="chain" id="PRO_0000230516" description="Small ribosomal subunit protein uS13">
    <location>
        <begin position="1"/>
        <end position="116"/>
    </location>
</feature>
<feature type="region of interest" description="Disordered" evidence="2">
    <location>
        <begin position="92"/>
        <end position="116"/>
    </location>
</feature>
<feature type="compositionally biased region" description="Basic residues" evidence="2">
    <location>
        <begin position="106"/>
        <end position="116"/>
    </location>
</feature>
<name>RS13_LACAC</name>
<accession>Q5FM67</accession>
<proteinExistence type="inferred from homology"/>
<dbReference type="EMBL" id="CP000033">
    <property type="protein sequence ID" value="AAV42207.1"/>
    <property type="molecule type" value="Genomic_DNA"/>
</dbReference>
<dbReference type="RefSeq" id="WP_003549046.1">
    <property type="nucleotide sequence ID" value="NC_006814.3"/>
</dbReference>
<dbReference type="RefSeq" id="YP_193238.1">
    <property type="nucleotide sequence ID" value="NC_006814.3"/>
</dbReference>
<dbReference type="SMR" id="Q5FM67"/>
<dbReference type="STRING" id="272621.LBA0315"/>
<dbReference type="GeneID" id="93290577"/>
<dbReference type="KEGG" id="lac:LBA0315"/>
<dbReference type="PATRIC" id="fig|272621.13.peg.301"/>
<dbReference type="eggNOG" id="COG0099">
    <property type="taxonomic scope" value="Bacteria"/>
</dbReference>
<dbReference type="HOGENOM" id="CLU_103849_1_1_9"/>
<dbReference type="OrthoDB" id="9803610at2"/>
<dbReference type="BioCyc" id="LACI272621:G1G49-309-MONOMER"/>
<dbReference type="Proteomes" id="UP000006381">
    <property type="component" value="Chromosome"/>
</dbReference>
<dbReference type="GO" id="GO:0005829">
    <property type="term" value="C:cytosol"/>
    <property type="evidence" value="ECO:0007669"/>
    <property type="project" value="TreeGrafter"/>
</dbReference>
<dbReference type="GO" id="GO:0015935">
    <property type="term" value="C:small ribosomal subunit"/>
    <property type="evidence" value="ECO:0007669"/>
    <property type="project" value="TreeGrafter"/>
</dbReference>
<dbReference type="GO" id="GO:0019843">
    <property type="term" value="F:rRNA binding"/>
    <property type="evidence" value="ECO:0007669"/>
    <property type="project" value="UniProtKB-UniRule"/>
</dbReference>
<dbReference type="GO" id="GO:0003735">
    <property type="term" value="F:structural constituent of ribosome"/>
    <property type="evidence" value="ECO:0007669"/>
    <property type="project" value="InterPro"/>
</dbReference>
<dbReference type="GO" id="GO:0000049">
    <property type="term" value="F:tRNA binding"/>
    <property type="evidence" value="ECO:0007669"/>
    <property type="project" value="UniProtKB-UniRule"/>
</dbReference>
<dbReference type="GO" id="GO:0006412">
    <property type="term" value="P:translation"/>
    <property type="evidence" value="ECO:0007669"/>
    <property type="project" value="UniProtKB-UniRule"/>
</dbReference>
<dbReference type="FunFam" id="1.10.8.50:FF:000001">
    <property type="entry name" value="30S ribosomal protein S13"/>
    <property type="match status" value="1"/>
</dbReference>
<dbReference type="FunFam" id="4.10.910.10:FF:000001">
    <property type="entry name" value="30S ribosomal protein S13"/>
    <property type="match status" value="1"/>
</dbReference>
<dbReference type="Gene3D" id="1.10.8.50">
    <property type="match status" value="1"/>
</dbReference>
<dbReference type="Gene3D" id="4.10.910.10">
    <property type="entry name" value="30s ribosomal protein s13, domain 2"/>
    <property type="match status" value="1"/>
</dbReference>
<dbReference type="HAMAP" id="MF_01315">
    <property type="entry name" value="Ribosomal_uS13"/>
    <property type="match status" value="1"/>
</dbReference>
<dbReference type="InterPro" id="IPR027437">
    <property type="entry name" value="Rbsml_uS13_C"/>
</dbReference>
<dbReference type="InterPro" id="IPR001892">
    <property type="entry name" value="Ribosomal_uS13"/>
</dbReference>
<dbReference type="InterPro" id="IPR010979">
    <property type="entry name" value="Ribosomal_uS13-like_H2TH"/>
</dbReference>
<dbReference type="InterPro" id="IPR019980">
    <property type="entry name" value="Ribosomal_uS13_bac-type"/>
</dbReference>
<dbReference type="InterPro" id="IPR018269">
    <property type="entry name" value="Ribosomal_uS13_CS"/>
</dbReference>
<dbReference type="NCBIfam" id="TIGR03631">
    <property type="entry name" value="uS13_bact"/>
    <property type="match status" value="1"/>
</dbReference>
<dbReference type="PANTHER" id="PTHR10871">
    <property type="entry name" value="30S RIBOSOMAL PROTEIN S13/40S RIBOSOMAL PROTEIN S18"/>
    <property type="match status" value="1"/>
</dbReference>
<dbReference type="PANTHER" id="PTHR10871:SF1">
    <property type="entry name" value="SMALL RIBOSOMAL SUBUNIT PROTEIN US13M"/>
    <property type="match status" value="1"/>
</dbReference>
<dbReference type="Pfam" id="PF00416">
    <property type="entry name" value="Ribosomal_S13"/>
    <property type="match status" value="1"/>
</dbReference>
<dbReference type="PIRSF" id="PIRSF002134">
    <property type="entry name" value="Ribosomal_S13"/>
    <property type="match status" value="1"/>
</dbReference>
<dbReference type="SUPFAM" id="SSF46946">
    <property type="entry name" value="S13-like H2TH domain"/>
    <property type="match status" value="1"/>
</dbReference>
<dbReference type="PROSITE" id="PS00646">
    <property type="entry name" value="RIBOSOMAL_S13_1"/>
    <property type="match status" value="1"/>
</dbReference>
<dbReference type="PROSITE" id="PS50159">
    <property type="entry name" value="RIBOSOMAL_S13_2"/>
    <property type="match status" value="1"/>
</dbReference>
<reference key="1">
    <citation type="journal article" date="2005" name="Proc. Natl. Acad. Sci. U.S.A.">
        <title>Complete genome sequence of the probiotic lactic acid bacterium Lactobacillus acidophilus NCFM.</title>
        <authorList>
            <person name="Altermann E."/>
            <person name="Russell W.M."/>
            <person name="Azcarate-Peril M.A."/>
            <person name="Barrangou R."/>
            <person name="Buck B.L."/>
            <person name="McAuliffe O."/>
            <person name="Souther N."/>
            <person name="Dobson A."/>
            <person name="Duong T."/>
            <person name="Callanan M."/>
            <person name="Lick S."/>
            <person name="Hamrick A."/>
            <person name="Cano R."/>
            <person name="Klaenhammer T.R."/>
        </authorList>
    </citation>
    <scope>NUCLEOTIDE SEQUENCE [LARGE SCALE GENOMIC DNA]</scope>
    <source>
        <strain>ATCC 700396 / NCK56 / N2 / NCFM</strain>
    </source>
</reference>
<evidence type="ECO:0000255" key="1">
    <source>
        <dbReference type="HAMAP-Rule" id="MF_01315"/>
    </source>
</evidence>
<evidence type="ECO:0000256" key="2">
    <source>
        <dbReference type="SAM" id="MobiDB-lite"/>
    </source>
</evidence>
<evidence type="ECO:0000305" key="3"/>
<comment type="function">
    <text evidence="1">Located at the top of the head of the 30S subunit, it contacts several helices of the 16S rRNA. In the 70S ribosome it contacts the 23S rRNA (bridge B1a) and protein L5 of the 50S subunit (bridge B1b), connecting the 2 subunits; these bridges are implicated in subunit movement. Contacts the tRNAs in the A and P-sites.</text>
</comment>
<comment type="subunit">
    <text evidence="1">Part of the 30S ribosomal subunit. Forms a loose heterodimer with protein S19. Forms two bridges to the 50S subunit in the 70S ribosome.</text>
</comment>
<comment type="similarity">
    <text evidence="1">Belongs to the universal ribosomal protein uS13 family.</text>
</comment>
<sequence length="116" mass="13178">MARIAGVDLPRDKRIVVALTYIYGIGDATAKKICADAGVSEDIRSKDLTPEDQEKLRAEVDKYRVEGDLRREVSMNIKRLVDIGSYRGIRHRRGLPVRGQNTKNNARTRKGTKRNR</sequence>
<protein>
    <recommendedName>
        <fullName evidence="1">Small ribosomal subunit protein uS13</fullName>
    </recommendedName>
    <alternativeName>
        <fullName evidence="3">30S ribosomal protein S13</fullName>
    </alternativeName>
</protein>
<keyword id="KW-1185">Reference proteome</keyword>
<keyword id="KW-0687">Ribonucleoprotein</keyword>
<keyword id="KW-0689">Ribosomal protein</keyword>
<keyword id="KW-0694">RNA-binding</keyword>
<keyword id="KW-0699">rRNA-binding</keyword>
<keyword id="KW-0820">tRNA-binding</keyword>
<organism>
    <name type="scientific">Lactobacillus acidophilus (strain ATCC 700396 / NCK56 / N2 / NCFM)</name>
    <dbReference type="NCBI Taxonomy" id="272621"/>
    <lineage>
        <taxon>Bacteria</taxon>
        <taxon>Bacillati</taxon>
        <taxon>Bacillota</taxon>
        <taxon>Bacilli</taxon>
        <taxon>Lactobacillales</taxon>
        <taxon>Lactobacillaceae</taxon>
        <taxon>Lactobacillus</taxon>
    </lineage>
</organism>
<gene>
    <name evidence="1" type="primary">rpsM</name>
    <name type="ordered locus">LBA0315</name>
</gene>